<name>CG24_YEAST</name>
<comment type="function">
    <text>Essential for the control of the cell cycle at the G2/M (mitosis) transition. Interacts with the CDC2 protein kinase to form MPF. G2/M cyclins accumulate steadily during G2 and are abruptly destroyed at mitosis.</text>
</comment>
<comment type="miscellaneous">
    <text evidence="1">Present with 98 molecules/cell in log phase SD medium.</text>
</comment>
<comment type="similarity">
    <text evidence="2">Belongs to the cyclin family. Cyclin AB subfamily.</text>
</comment>
<reference key="1">
    <citation type="journal article" date="1992" name="Genes Dev.">
        <title>Cyclin-B homologs in Saccharomyces cerevisiae function in S phase and in G2.</title>
        <authorList>
            <person name="Richardson H."/>
            <person name="Lew D.J."/>
            <person name="Henze M."/>
            <person name="Sugimoto K."/>
            <person name="Reed S.I."/>
        </authorList>
    </citation>
    <scope>NUCLEOTIDE SEQUENCE [GENOMIC DNA]</scope>
    <source>
        <strain>ATCC 204508 / S288c</strain>
    </source>
</reference>
<reference key="2">
    <citation type="journal article" date="1992" name="Mol. Biol. Cell">
        <title>Characterization of four B-type cyclin genes of the budding yeast Saccharomyces cerevisiae.</title>
        <authorList>
            <person name="Fitch I."/>
            <person name="Dahmann C."/>
            <person name="Surana U."/>
            <person name="Amon A."/>
            <person name="Nasmyth K."/>
            <person name="Goetsch L."/>
            <person name="Byers B."/>
            <person name="Futcher B."/>
        </authorList>
    </citation>
    <scope>NUCLEOTIDE SEQUENCE [GENOMIC DNA]</scope>
</reference>
<reference key="3">
    <citation type="journal article" date="1997" name="Nature">
        <title>The nucleotide sequence of Saccharomyces cerevisiae chromosome XII.</title>
        <authorList>
            <person name="Johnston M."/>
            <person name="Hillier L.W."/>
            <person name="Riles L."/>
            <person name="Albermann K."/>
            <person name="Andre B."/>
            <person name="Ansorge W."/>
            <person name="Benes V."/>
            <person name="Brueckner M."/>
            <person name="Delius H."/>
            <person name="Dubois E."/>
            <person name="Duesterhoeft A."/>
            <person name="Entian K.-D."/>
            <person name="Floeth M."/>
            <person name="Goffeau A."/>
            <person name="Hebling U."/>
            <person name="Heumann K."/>
            <person name="Heuss-Neitzel D."/>
            <person name="Hilbert H."/>
            <person name="Hilger F."/>
            <person name="Kleine K."/>
            <person name="Koetter P."/>
            <person name="Louis E.J."/>
            <person name="Messenguy F."/>
            <person name="Mewes H.-W."/>
            <person name="Miosga T."/>
            <person name="Moestl D."/>
            <person name="Mueller-Auer S."/>
            <person name="Nentwich U."/>
            <person name="Obermaier B."/>
            <person name="Piravandi E."/>
            <person name="Pohl T.M."/>
            <person name="Portetelle D."/>
            <person name="Purnelle B."/>
            <person name="Rechmann S."/>
            <person name="Rieger M."/>
            <person name="Rinke M."/>
            <person name="Rose M."/>
            <person name="Scharfe M."/>
            <person name="Scherens B."/>
            <person name="Scholler P."/>
            <person name="Schwager C."/>
            <person name="Schwarz S."/>
            <person name="Underwood A.P."/>
            <person name="Urrestarazu L.A."/>
            <person name="Vandenbol M."/>
            <person name="Verhasselt P."/>
            <person name="Vierendeels F."/>
            <person name="Voet M."/>
            <person name="Volckaert G."/>
            <person name="Voss H."/>
            <person name="Wambutt R."/>
            <person name="Wedler E."/>
            <person name="Wedler H."/>
            <person name="Zimmermann F.K."/>
            <person name="Zollner A."/>
            <person name="Hani J."/>
            <person name="Hoheisel J.D."/>
        </authorList>
    </citation>
    <scope>NUCLEOTIDE SEQUENCE [LARGE SCALE GENOMIC DNA]</scope>
    <source>
        <strain>ATCC 204508 / S288c</strain>
    </source>
</reference>
<reference key="4">
    <citation type="journal article" date="2014" name="G3 (Bethesda)">
        <title>The reference genome sequence of Saccharomyces cerevisiae: Then and now.</title>
        <authorList>
            <person name="Engel S.R."/>
            <person name="Dietrich F.S."/>
            <person name="Fisk D.G."/>
            <person name="Binkley G."/>
            <person name="Balakrishnan R."/>
            <person name="Costanzo M.C."/>
            <person name="Dwight S.S."/>
            <person name="Hitz B.C."/>
            <person name="Karra K."/>
            <person name="Nash R.S."/>
            <person name="Weng S."/>
            <person name="Wong E.D."/>
            <person name="Lloyd P."/>
            <person name="Skrzypek M.S."/>
            <person name="Miyasato S.R."/>
            <person name="Simison M."/>
            <person name="Cherry J.M."/>
        </authorList>
    </citation>
    <scope>GENOME REANNOTATION</scope>
    <source>
        <strain>ATCC 204508 / S288c</strain>
    </source>
</reference>
<reference key="5">
    <citation type="journal article" date="1991" name="Cell">
        <title>The role of CDC28 and cyclins during mitosis in the budding yeast S. cerevisiae.</title>
        <authorList>
            <person name="Surana U."/>
            <person name="Robitsch H."/>
            <person name="Price C."/>
            <person name="Schuster T."/>
            <person name="Fitch I."/>
            <person name="Futcher A.B."/>
            <person name="Nasmyth K."/>
        </authorList>
    </citation>
    <scope>NUCLEOTIDE SEQUENCE [GENOMIC DNA] OF 233-422</scope>
</reference>
<reference key="6">
    <citation type="journal article" date="2003" name="Nature">
        <title>Global analysis of protein expression in yeast.</title>
        <authorList>
            <person name="Ghaemmaghami S."/>
            <person name="Huh W.-K."/>
            <person name="Bower K."/>
            <person name="Howson R.W."/>
            <person name="Belle A."/>
            <person name="Dephoure N."/>
            <person name="O'Shea E.K."/>
            <person name="Weissman J.S."/>
        </authorList>
    </citation>
    <scope>LEVEL OF PROTEIN EXPRESSION [LARGE SCALE ANALYSIS]</scope>
</reference>
<organism>
    <name type="scientific">Saccharomyces cerevisiae (strain ATCC 204508 / S288c)</name>
    <name type="common">Baker's yeast</name>
    <dbReference type="NCBI Taxonomy" id="559292"/>
    <lineage>
        <taxon>Eukaryota</taxon>
        <taxon>Fungi</taxon>
        <taxon>Dikarya</taxon>
        <taxon>Ascomycota</taxon>
        <taxon>Saccharomycotina</taxon>
        <taxon>Saccharomycetes</taxon>
        <taxon>Saccharomycetales</taxon>
        <taxon>Saccharomycetaceae</taxon>
        <taxon>Saccharomyces</taxon>
    </lineage>
</organism>
<gene>
    <name type="primary">CLB4</name>
    <name type="ordered locus">YLR210W</name>
    <name type="ORF">L8167.3</name>
</gene>
<proteinExistence type="evidence at protein level"/>
<feature type="chain" id="PRO_0000080406" description="G2/mitotic-specific cyclin-4">
    <location>
        <begin position="1"/>
        <end position="460"/>
    </location>
</feature>
<feature type="sequence conflict" description="In Ref. 5; no nucleotide entry." evidence="2" ref="5">
    <original>Q</original>
    <variation>R</variation>
    <location>
        <position position="255"/>
    </location>
</feature>
<feature type="sequence conflict" description="In Ref. 5; no nucleotide entry." evidence="2" ref="5">
    <original>D</original>
    <variation>S</variation>
    <location>
        <position position="318"/>
    </location>
</feature>
<feature type="sequence conflict" description="In Ref. 5; no nucleotide entry." evidence="2" ref="5">
    <original>I</original>
    <variation>T</variation>
    <location>
        <position position="328"/>
    </location>
</feature>
<dbReference type="EMBL" id="X69426">
    <property type="protein sequence ID" value="CAA49202.1"/>
    <property type="molecule type" value="Genomic_DNA"/>
</dbReference>
<dbReference type="EMBL" id="M80303">
    <property type="protein sequence ID" value="AAA73136.1"/>
    <property type="molecule type" value="Genomic_DNA"/>
</dbReference>
<dbReference type="EMBL" id="U14913">
    <property type="protein sequence ID" value="AAB67425.1"/>
    <property type="molecule type" value="Genomic_DNA"/>
</dbReference>
<dbReference type="EMBL" id="BK006945">
    <property type="protein sequence ID" value="DAA09527.1"/>
    <property type="molecule type" value="Genomic_DNA"/>
</dbReference>
<dbReference type="PIR" id="B60048">
    <property type="entry name" value="B60048"/>
</dbReference>
<dbReference type="RefSeq" id="NP_013311.1">
    <property type="nucleotide sequence ID" value="NM_001182097.1"/>
</dbReference>
<dbReference type="SMR" id="P24871"/>
<dbReference type="BioGRID" id="31478">
    <property type="interactions" value="109"/>
</dbReference>
<dbReference type="ComplexPortal" id="CPX-337">
    <property type="entry name" value="CLB4-CDC28 kinase complex"/>
</dbReference>
<dbReference type="DIP" id="DIP-2268N"/>
<dbReference type="FunCoup" id="P24871">
    <property type="interactions" value="2272"/>
</dbReference>
<dbReference type="IntAct" id="P24871">
    <property type="interactions" value="6"/>
</dbReference>
<dbReference type="MINT" id="P24871"/>
<dbReference type="STRING" id="4932.YLR210W"/>
<dbReference type="iPTMnet" id="P24871"/>
<dbReference type="PaxDb" id="4932-YLR210W"/>
<dbReference type="PeptideAtlas" id="P24871"/>
<dbReference type="EnsemblFungi" id="YLR210W_mRNA">
    <property type="protein sequence ID" value="YLR210W"/>
    <property type="gene ID" value="YLR210W"/>
</dbReference>
<dbReference type="GeneID" id="850907"/>
<dbReference type="KEGG" id="sce:YLR210W"/>
<dbReference type="AGR" id="SGD:S000004200"/>
<dbReference type="SGD" id="S000004200">
    <property type="gene designation" value="CLB4"/>
</dbReference>
<dbReference type="VEuPathDB" id="FungiDB:YLR210W"/>
<dbReference type="eggNOG" id="KOG0653">
    <property type="taxonomic scope" value="Eukaryota"/>
</dbReference>
<dbReference type="GeneTree" id="ENSGT00940000168350"/>
<dbReference type="HOGENOM" id="CLU_020695_12_1_1"/>
<dbReference type="InParanoid" id="P24871"/>
<dbReference type="OMA" id="YMLENTY"/>
<dbReference type="OrthoDB" id="5590282at2759"/>
<dbReference type="BioCyc" id="YEAST:G3O-32327-MONOMER"/>
<dbReference type="BioGRID-ORCS" id="850907">
    <property type="hits" value="1 hit in 10 CRISPR screens"/>
</dbReference>
<dbReference type="CD-CODE" id="876000F7">
    <property type="entry name" value="Centrosome"/>
</dbReference>
<dbReference type="PRO" id="PR:P24871"/>
<dbReference type="Proteomes" id="UP000002311">
    <property type="component" value="Chromosome XII"/>
</dbReference>
<dbReference type="RNAct" id="P24871">
    <property type="molecule type" value="protein"/>
</dbReference>
<dbReference type="GO" id="GO:0000307">
    <property type="term" value="C:cyclin-dependent protein kinase holoenzyme complex"/>
    <property type="evidence" value="ECO:0000250"/>
    <property type="project" value="ComplexPortal"/>
</dbReference>
<dbReference type="GO" id="GO:0005737">
    <property type="term" value="C:cytoplasm"/>
    <property type="evidence" value="ECO:0000314"/>
    <property type="project" value="SGD"/>
</dbReference>
<dbReference type="GO" id="GO:0005815">
    <property type="term" value="C:microtubule organizing center"/>
    <property type="evidence" value="ECO:0000318"/>
    <property type="project" value="GO_Central"/>
</dbReference>
<dbReference type="GO" id="GO:0005634">
    <property type="term" value="C:nucleus"/>
    <property type="evidence" value="ECO:0000314"/>
    <property type="project" value="SGD"/>
</dbReference>
<dbReference type="GO" id="GO:0016538">
    <property type="term" value="F:cyclin-dependent protein serine/threonine kinase regulator activity"/>
    <property type="evidence" value="ECO:0000315"/>
    <property type="project" value="SGD"/>
</dbReference>
<dbReference type="GO" id="GO:0051301">
    <property type="term" value="P:cell division"/>
    <property type="evidence" value="ECO:0007669"/>
    <property type="project" value="UniProtKB-KW"/>
</dbReference>
<dbReference type="GO" id="GO:0000082">
    <property type="term" value="P:G1/S transition of mitotic cell cycle"/>
    <property type="evidence" value="ECO:0000318"/>
    <property type="project" value="GO_Central"/>
</dbReference>
<dbReference type="GO" id="GO:0000086">
    <property type="term" value="P:G2/M transition of mitotic cell cycle"/>
    <property type="evidence" value="ECO:0000315"/>
    <property type="project" value="ComplexPortal"/>
</dbReference>
<dbReference type="GO" id="GO:0010696">
    <property type="term" value="P:positive regulation of mitotic spindle pole body separation"/>
    <property type="evidence" value="ECO:0000316"/>
    <property type="project" value="SGD"/>
</dbReference>
<dbReference type="GO" id="GO:1901673">
    <property type="term" value="P:regulation of mitotic spindle assembly"/>
    <property type="evidence" value="ECO:0000316"/>
    <property type="project" value="SGD"/>
</dbReference>
<dbReference type="CDD" id="cd20568">
    <property type="entry name" value="CYCLIN_CLBs_yeast_rpt1"/>
    <property type="match status" value="1"/>
</dbReference>
<dbReference type="CDD" id="cd20512">
    <property type="entry name" value="CYCLIN_CLBs_yeast_rpt2"/>
    <property type="match status" value="1"/>
</dbReference>
<dbReference type="FunFam" id="1.10.472.10:FF:000001">
    <property type="entry name" value="G2/mitotic-specific cyclin"/>
    <property type="match status" value="1"/>
</dbReference>
<dbReference type="Gene3D" id="1.10.472.10">
    <property type="entry name" value="Cyclin-like"/>
    <property type="match status" value="2"/>
</dbReference>
<dbReference type="InterPro" id="IPR039361">
    <property type="entry name" value="Cyclin"/>
</dbReference>
<dbReference type="InterPro" id="IPR013763">
    <property type="entry name" value="Cyclin-like_dom"/>
</dbReference>
<dbReference type="InterPro" id="IPR036915">
    <property type="entry name" value="Cyclin-like_sf"/>
</dbReference>
<dbReference type="InterPro" id="IPR046965">
    <property type="entry name" value="Cyclin_A/B-like"/>
</dbReference>
<dbReference type="InterPro" id="IPR004367">
    <property type="entry name" value="Cyclin_C-dom"/>
</dbReference>
<dbReference type="InterPro" id="IPR006671">
    <property type="entry name" value="Cyclin_N"/>
</dbReference>
<dbReference type="InterPro" id="IPR048258">
    <property type="entry name" value="Cyclins_cyclin-box"/>
</dbReference>
<dbReference type="PANTHER" id="PTHR10177">
    <property type="entry name" value="CYCLINS"/>
    <property type="match status" value="1"/>
</dbReference>
<dbReference type="Pfam" id="PF02984">
    <property type="entry name" value="Cyclin_C"/>
    <property type="match status" value="1"/>
</dbReference>
<dbReference type="Pfam" id="PF00134">
    <property type="entry name" value="Cyclin_N"/>
    <property type="match status" value="1"/>
</dbReference>
<dbReference type="PIRSF" id="PIRSF001771">
    <property type="entry name" value="Cyclin_A_B_D_E"/>
    <property type="match status" value="1"/>
</dbReference>
<dbReference type="SMART" id="SM00385">
    <property type="entry name" value="CYCLIN"/>
    <property type="match status" value="2"/>
</dbReference>
<dbReference type="SMART" id="SM01332">
    <property type="entry name" value="Cyclin_C"/>
    <property type="match status" value="1"/>
</dbReference>
<dbReference type="SUPFAM" id="SSF47954">
    <property type="entry name" value="Cyclin-like"/>
    <property type="match status" value="2"/>
</dbReference>
<dbReference type="PROSITE" id="PS00292">
    <property type="entry name" value="CYCLINS"/>
    <property type="match status" value="1"/>
</dbReference>
<protein>
    <recommendedName>
        <fullName>G2/mitotic-specific cyclin-4</fullName>
    </recommendedName>
</protein>
<accession>P24871</accession>
<accession>D6VYL1</accession>
<keyword id="KW-0131">Cell cycle</keyword>
<keyword id="KW-0132">Cell division</keyword>
<keyword id="KW-0195">Cyclin</keyword>
<keyword id="KW-0498">Mitosis</keyword>
<keyword id="KW-1185">Reference proteome</keyword>
<sequence length="460" mass="53853">MMLEGYTVQPPQSTLIGDIEIQDENANQEVKNVLYQGVQKGIKRLEKRQRRVALGDVTSQKANKIHNAIHNKFHQTKNNFEIENIRSSALVKEQQRDVRHEDSDYFLIDSSEGSSTDDEQVNEDAIDDLLSRRVNDQQIQADEVYEDFDGEMQDVIEEDVDSQIEPLSPINNDEIQTELDRAFEKYFRSVPNPLDDDTHDVVMVVEYASDIFYYLRELEVKYRPNPYYMQNQVELTWPFRRTMIDWLVQLHFRFQLLPETLYLTINIVDRFLSKKTVTLNRFQLVGVSALFIAAKFEEINCPTLDDLVYMLENTYTRDDIIRAEQYMIDTLEFEIGWPGPMPFLRRISKADDYDFEPRTLAKYLLETTIVEPKLVAAAPSWLAAGAYFLSRTILGSNDWSLKHVFYSGYTSSQIIPLASLILENCKNASRRHHSIWKKYFDQKHYRCSQIVEEWIVSTEA</sequence>
<evidence type="ECO:0000269" key="1">
    <source>
    </source>
</evidence>
<evidence type="ECO:0000305" key="2"/>